<gene>
    <name evidence="1" type="primary">sgrR</name>
    <name type="ordered locus">SFV_0061</name>
</gene>
<keyword id="KW-0010">Activator</keyword>
<keyword id="KW-0238">DNA-binding</keyword>
<keyword id="KW-0678">Repressor</keyword>
<keyword id="KW-0804">Transcription</keyword>
<keyword id="KW-0805">Transcription regulation</keyword>
<proteinExistence type="inferred from homology"/>
<reference key="1">
    <citation type="journal article" date="2006" name="BMC Genomics">
        <title>Complete genome sequence of Shigella flexneri 5b and comparison with Shigella flexneri 2a.</title>
        <authorList>
            <person name="Nie H."/>
            <person name="Yang F."/>
            <person name="Zhang X."/>
            <person name="Yang J."/>
            <person name="Chen L."/>
            <person name="Wang J."/>
            <person name="Xiong Z."/>
            <person name="Peng J."/>
            <person name="Sun L."/>
            <person name="Dong J."/>
            <person name="Xue Y."/>
            <person name="Xu X."/>
            <person name="Chen S."/>
            <person name="Yao Z."/>
            <person name="Shen Y."/>
            <person name="Jin Q."/>
        </authorList>
    </citation>
    <scope>NUCLEOTIDE SEQUENCE [LARGE SCALE GENOMIC DNA]</scope>
    <source>
        <strain>8401</strain>
    </source>
</reference>
<feature type="chain" id="PRO_0000309254" description="HTH-type transcriptional regulator SgrR">
    <location>
        <begin position="1"/>
        <end position="551"/>
    </location>
</feature>
<feature type="domain" description="HTH marR-type" evidence="1">
    <location>
        <begin position="1"/>
        <end position="116"/>
    </location>
</feature>
<feature type="DNA-binding region" description="H-T-H motif" evidence="1">
    <location>
        <begin position="26"/>
        <end position="49"/>
    </location>
</feature>
<feature type="region of interest" description="Solute-binding" evidence="1">
    <location>
        <begin position="163"/>
        <end position="492"/>
    </location>
</feature>
<comment type="function">
    <text evidence="1">Activates the small RNA gene sgrS under glucose-phosphate stress conditions as well as yfdZ. Represses its own transcription under both stress and non-stress conditions. Might act as a sensor of the intracellular accumulation of phosphoglucose by binding these molecules in its C-terminal solute-binding domain.</text>
</comment>
<accession>Q0T8C8</accession>
<dbReference type="EMBL" id="CP000266">
    <property type="protein sequence ID" value="ABF02348.1"/>
    <property type="molecule type" value="Genomic_DNA"/>
</dbReference>
<dbReference type="RefSeq" id="WP_005053586.1">
    <property type="nucleotide sequence ID" value="NC_008258.1"/>
</dbReference>
<dbReference type="SMR" id="Q0T8C8"/>
<dbReference type="KEGG" id="sfv:SFV_0061"/>
<dbReference type="HOGENOM" id="CLU_017028_12_3_6"/>
<dbReference type="Proteomes" id="UP000000659">
    <property type="component" value="Chromosome"/>
</dbReference>
<dbReference type="GO" id="GO:0003677">
    <property type="term" value="F:DNA binding"/>
    <property type="evidence" value="ECO:0007669"/>
    <property type="project" value="UniProtKB-KW"/>
</dbReference>
<dbReference type="GO" id="GO:1904680">
    <property type="term" value="F:peptide transmembrane transporter activity"/>
    <property type="evidence" value="ECO:0007669"/>
    <property type="project" value="TreeGrafter"/>
</dbReference>
<dbReference type="GO" id="GO:0045892">
    <property type="term" value="P:negative regulation of DNA-templated transcription"/>
    <property type="evidence" value="ECO:0007669"/>
    <property type="project" value="UniProtKB-UniRule"/>
</dbReference>
<dbReference type="GO" id="GO:0015833">
    <property type="term" value="P:peptide transport"/>
    <property type="evidence" value="ECO:0007669"/>
    <property type="project" value="TreeGrafter"/>
</dbReference>
<dbReference type="GO" id="GO:0045893">
    <property type="term" value="P:positive regulation of DNA-templated transcription"/>
    <property type="evidence" value="ECO:0007669"/>
    <property type="project" value="UniProtKB-UniRule"/>
</dbReference>
<dbReference type="CDD" id="cd08507">
    <property type="entry name" value="PBP2_SgrR_like"/>
    <property type="match status" value="1"/>
</dbReference>
<dbReference type="FunFam" id="3.40.190.10:FF:000070">
    <property type="entry name" value="HTH-type transcriptional regulator SgrR"/>
    <property type="match status" value="1"/>
</dbReference>
<dbReference type="Gene3D" id="3.40.190.10">
    <property type="entry name" value="Periplasmic binding protein-like II"/>
    <property type="match status" value="1"/>
</dbReference>
<dbReference type="HAMAP" id="MF_01449">
    <property type="entry name" value="HTH_type_SgrR"/>
    <property type="match status" value="1"/>
</dbReference>
<dbReference type="InterPro" id="IPR039424">
    <property type="entry name" value="SBP_5"/>
</dbReference>
<dbReference type="InterPro" id="IPR000914">
    <property type="entry name" value="SBP_5_dom"/>
</dbReference>
<dbReference type="InterPro" id="IPR025370">
    <property type="entry name" value="SgrR_HTH_N"/>
</dbReference>
<dbReference type="InterPro" id="IPR023767">
    <property type="entry name" value="Tscrpt_reg_SgrR"/>
</dbReference>
<dbReference type="NCBIfam" id="NF010149">
    <property type="entry name" value="PRK13626.1"/>
    <property type="match status" value="1"/>
</dbReference>
<dbReference type="PANTHER" id="PTHR30290:SF72">
    <property type="entry name" value="HTH-TYPE TRANSCRIPTIONAL REGULATOR SGRR"/>
    <property type="match status" value="1"/>
</dbReference>
<dbReference type="PANTHER" id="PTHR30290">
    <property type="entry name" value="PERIPLASMIC BINDING COMPONENT OF ABC TRANSPORTER"/>
    <property type="match status" value="1"/>
</dbReference>
<dbReference type="Pfam" id="PF00496">
    <property type="entry name" value="SBP_bac_5"/>
    <property type="match status" value="1"/>
</dbReference>
<dbReference type="Pfam" id="PF12793">
    <property type="entry name" value="SgrR_N"/>
    <property type="match status" value="1"/>
</dbReference>
<dbReference type="SUPFAM" id="SSF53850">
    <property type="entry name" value="Periplasmic binding protein-like II"/>
    <property type="match status" value="1"/>
</dbReference>
<name>SGRR_SHIF8</name>
<protein>
    <recommendedName>
        <fullName evidence="1">HTH-type transcriptional regulator SgrR</fullName>
    </recommendedName>
</protein>
<sequence length="551" mass="63966">MPSARLQQQFIRLWQCCEGKSQDTTLNELAALLSCSRRHMRTLLNTMQDRGWLTWEAEVGRGKRSRLTFLYTGLALQQQRAEDLLEQDRIDQLVQLVGDKATVRQMLVSHLGRSFRQGRHILRVLYYRPLRNLLPGSALRRSETHIARQIFSSLTRINEENGELEADIAHHWQQISPLHWRFFLRPGVHFHHGRELEMDDVIASLKRINTLPLYSHITDIVSPTPWTLDIHLTQPDRWLPLLLGQVPAMILPCEWETLSNFASHPIGTGPYAVIRNSTNQLKIQAFDDFFGYRALIDEVNVWVLPEIADEPAGGLMLKGPQGEKKEIESRLEEGCYYLLFDSRTHRGANQQVRDWVSYVLSPTNLVYFAEEQYQQLWFPAYGLLPRWHHARTIKSEKPAGLESLTLTFYQDHSEHRVIAGIMQQILASHQVTLEIKEISYDQWHEGEIESDIWLNSANFTLPLDFSLFAHLCEVPLLQHCIPIDWQADAARWRNGEMNLANWCQQLVASKAMVPLIHHWLIIQGQRSMRGLRMNTLGWFDFKSAWFAPPDP</sequence>
<evidence type="ECO:0000255" key="1">
    <source>
        <dbReference type="HAMAP-Rule" id="MF_01449"/>
    </source>
</evidence>
<organism>
    <name type="scientific">Shigella flexneri serotype 5b (strain 8401)</name>
    <dbReference type="NCBI Taxonomy" id="373384"/>
    <lineage>
        <taxon>Bacteria</taxon>
        <taxon>Pseudomonadati</taxon>
        <taxon>Pseudomonadota</taxon>
        <taxon>Gammaproteobacteria</taxon>
        <taxon>Enterobacterales</taxon>
        <taxon>Enterobacteriaceae</taxon>
        <taxon>Shigella</taxon>
    </lineage>
</organism>